<feature type="chain" id="PRO_0000065644" description="Female-specific protein transformer">
    <location>
        <begin position="1"/>
        <end position="201"/>
    </location>
</feature>
<feature type="region of interest" description="Disordered" evidence="2">
    <location>
        <begin position="1"/>
        <end position="117"/>
    </location>
</feature>
<feature type="compositionally biased region" description="Basic and acidic residues" evidence="2">
    <location>
        <begin position="9"/>
        <end position="37"/>
    </location>
</feature>
<feature type="compositionally biased region" description="Basic residues" evidence="2">
    <location>
        <begin position="38"/>
        <end position="62"/>
    </location>
</feature>
<feature type="compositionally biased region" description="Basic residues" evidence="2">
    <location>
        <begin position="99"/>
        <end position="115"/>
    </location>
</feature>
<dbReference type="EMBL" id="X66931">
    <property type="protein sequence ID" value="CAA47365.1"/>
    <property type="molecule type" value="Genomic_DNA"/>
</dbReference>
<dbReference type="PIR" id="S26045">
    <property type="entry name" value="S26045"/>
</dbReference>
<dbReference type="SMR" id="Q23949"/>
<dbReference type="OrthoDB" id="7873072at2759"/>
<dbReference type="Proteomes" id="UP000504633">
    <property type="component" value="Unplaced"/>
</dbReference>
<dbReference type="GO" id="GO:0016607">
    <property type="term" value="C:nuclear speck"/>
    <property type="evidence" value="ECO:0007669"/>
    <property type="project" value="UniProtKB-SubCell"/>
</dbReference>
<dbReference type="GO" id="GO:0030154">
    <property type="term" value="P:cell differentiation"/>
    <property type="evidence" value="ECO:0007669"/>
    <property type="project" value="UniProtKB-KW"/>
</dbReference>
<dbReference type="GO" id="GO:0046660">
    <property type="term" value="P:female sex differentiation"/>
    <property type="evidence" value="ECO:0007669"/>
    <property type="project" value="InterPro"/>
</dbReference>
<dbReference type="GO" id="GO:0006397">
    <property type="term" value="P:mRNA processing"/>
    <property type="evidence" value="ECO:0007669"/>
    <property type="project" value="InterPro"/>
</dbReference>
<dbReference type="InterPro" id="IPR010519">
    <property type="entry name" value="Tra"/>
</dbReference>
<dbReference type="Pfam" id="PF06495">
    <property type="entry name" value="Transformer"/>
    <property type="match status" value="1"/>
</dbReference>
<reference key="1">
    <citation type="journal article" date="1992" name="Genetics">
        <title>Interspecific comparison of the transformer gene of Drosophila reveals an unusually high degree of evolutionary divergence.</title>
        <authorList>
            <person name="O'Neil M.T."/>
            <person name="Belote J.M."/>
        </authorList>
    </citation>
    <scope>NUCLEOTIDE SEQUENCE [GENOMIC DNA]</scope>
    <scope>FUNCTION</scope>
</reference>
<comment type="function">
    <text evidence="3">Member of the regulatory pathway controlling female somatic sexual differentiation, regulated by Sxl. Activates dsx female-specific splicing by promoting the formation of a splicing enhancer complex which consists of tra, tra2 and sr proteins.</text>
</comment>
<comment type="subcellular location">
    <subcellularLocation>
        <location evidence="1">Nucleus speckle</location>
    </subcellularLocation>
    <text evidence="1">Speckled subnuclear compartment.</text>
</comment>
<comment type="domain">
    <text evidence="1">RS domain directs localization of proteins to the speckled subnuclear compartment and the purpose of this localization is to allow colocalization and co-concentration of components of the splicing and splicing regulatory machinery to permit relatively high rates and/or efficiencies of reaction and interaction.</text>
</comment>
<comment type="miscellaneous">
    <text>The sexual regulation of tra occurs through a mechanism of sex-specific alternative RNA splicing. The non-sex-specific RNA expressed in males is not translated.</text>
</comment>
<accession>Q23949</accession>
<name>TRSF_DROHY</name>
<proteinExistence type="inferred from homology"/>
<sequence>MDADSSSRSPRDTRTCARPKEKVPYFADEGRERDRVRNLRHRKTSITRPTTSHRGRPMRARSRSYSAERNCCQRRRRSRSCERRHSDTRHKLTTATVTKQRRRRSRSRSRSRSRTPRIITVPVPVPAADYPYAYAWPPPPQAPQFNPMYGAVPYGMPSRPVYPAHPYFAPYPRPRLTFPYRAPPFRPHPRFSYRNQRPAPN</sequence>
<protein>
    <recommendedName>
        <fullName>Female-specific protein transformer</fullName>
    </recommendedName>
</protein>
<gene>
    <name type="primary">tra</name>
</gene>
<organism>
    <name type="scientific">Drosophila hydei</name>
    <name type="common">Fruit fly</name>
    <dbReference type="NCBI Taxonomy" id="7224"/>
    <lineage>
        <taxon>Eukaryota</taxon>
        <taxon>Metazoa</taxon>
        <taxon>Ecdysozoa</taxon>
        <taxon>Arthropoda</taxon>
        <taxon>Hexapoda</taxon>
        <taxon>Insecta</taxon>
        <taxon>Pterygota</taxon>
        <taxon>Neoptera</taxon>
        <taxon>Endopterygota</taxon>
        <taxon>Diptera</taxon>
        <taxon>Brachycera</taxon>
        <taxon>Muscomorpha</taxon>
        <taxon>Ephydroidea</taxon>
        <taxon>Drosophilidae</taxon>
        <taxon>Drosophila</taxon>
    </lineage>
</organism>
<keyword id="KW-0221">Differentiation</keyword>
<keyword id="KW-0539">Nucleus</keyword>
<keyword id="KW-0726">Sexual differentiation</keyword>
<evidence type="ECO:0000250" key="1"/>
<evidence type="ECO:0000256" key="2">
    <source>
        <dbReference type="SAM" id="MobiDB-lite"/>
    </source>
</evidence>
<evidence type="ECO:0000269" key="3">
    <source>
    </source>
</evidence>